<comment type="function">
    <text evidence="3 4">Inhibits fructosidases from vacuoles (vacuolar invertase VI).</text>
</comment>
<comment type="subcellular location">
    <subcellularLocation>
        <location evidence="7">Vacuole</location>
    </subcellularLocation>
</comment>
<comment type="alternative products">
    <event type="alternative splicing"/>
    <isoform>
        <id>F4HWQ8-1</id>
        <name>1</name>
        <sequence type="displayed"/>
    </isoform>
    <isoform>
        <id>F4HWQ8-2</id>
        <name>2</name>
        <sequence type="described" ref="VSP_043174"/>
    </isoform>
</comment>
<comment type="tissue specificity">
    <text evidence="4">Mostly expressed in roots, senescent leaves and flowers (in sepals), and, to a lower extent, in stems, specifically in the vascular tissues (e.g. in the phloem).</text>
</comment>
<comment type="disruption phenotype">
    <text evidence="4">Increased vacuolar invertase activity leading to accumulation of hexose.</text>
</comment>
<comment type="similarity">
    <text evidence="7">Belongs to the PMEI family.</text>
</comment>
<reference key="1">
    <citation type="journal article" date="2000" name="Nature">
        <title>Sequence and analysis of chromosome 1 of the plant Arabidopsis thaliana.</title>
        <authorList>
            <person name="Theologis A."/>
            <person name="Ecker J.R."/>
            <person name="Palm C.J."/>
            <person name="Federspiel N.A."/>
            <person name="Kaul S."/>
            <person name="White O."/>
            <person name="Alonso J."/>
            <person name="Altafi H."/>
            <person name="Araujo R."/>
            <person name="Bowman C.L."/>
            <person name="Brooks S.Y."/>
            <person name="Buehler E."/>
            <person name="Chan A."/>
            <person name="Chao Q."/>
            <person name="Chen H."/>
            <person name="Cheuk R.F."/>
            <person name="Chin C.W."/>
            <person name="Chung M.K."/>
            <person name="Conn L."/>
            <person name="Conway A.B."/>
            <person name="Conway A.R."/>
            <person name="Creasy T.H."/>
            <person name="Dewar K."/>
            <person name="Dunn P."/>
            <person name="Etgu P."/>
            <person name="Feldblyum T.V."/>
            <person name="Feng J.-D."/>
            <person name="Fong B."/>
            <person name="Fujii C.Y."/>
            <person name="Gill J.E."/>
            <person name="Goldsmith A.D."/>
            <person name="Haas B."/>
            <person name="Hansen N.F."/>
            <person name="Hughes B."/>
            <person name="Huizar L."/>
            <person name="Hunter J.L."/>
            <person name="Jenkins J."/>
            <person name="Johnson-Hopson C."/>
            <person name="Khan S."/>
            <person name="Khaykin E."/>
            <person name="Kim C.J."/>
            <person name="Koo H.L."/>
            <person name="Kremenetskaia I."/>
            <person name="Kurtz D.B."/>
            <person name="Kwan A."/>
            <person name="Lam B."/>
            <person name="Langin-Hooper S."/>
            <person name="Lee A."/>
            <person name="Lee J.M."/>
            <person name="Lenz C.A."/>
            <person name="Li J.H."/>
            <person name="Li Y.-P."/>
            <person name="Lin X."/>
            <person name="Liu S.X."/>
            <person name="Liu Z.A."/>
            <person name="Luros J.S."/>
            <person name="Maiti R."/>
            <person name="Marziali A."/>
            <person name="Militscher J."/>
            <person name="Miranda M."/>
            <person name="Nguyen M."/>
            <person name="Nierman W.C."/>
            <person name="Osborne B.I."/>
            <person name="Pai G."/>
            <person name="Peterson J."/>
            <person name="Pham P.K."/>
            <person name="Rizzo M."/>
            <person name="Rooney T."/>
            <person name="Rowley D."/>
            <person name="Sakano H."/>
            <person name="Salzberg S.L."/>
            <person name="Schwartz J.R."/>
            <person name="Shinn P."/>
            <person name="Southwick A.M."/>
            <person name="Sun H."/>
            <person name="Tallon L.J."/>
            <person name="Tambunga G."/>
            <person name="Toriumi M.J."/>
            <person name="Town C.D."/>
            <person name="Utterback T."/>
            <person name="Van Aken S."/>
            <person name="Vaysberg M."/>
            <person name="Vysotskaia V.S."/>
            <person name="Walker M."/>
            <person name="Wu D."/>
            <person name="Yu G."/>
            <person name="Fraser C.M."/>
            <person name="Venter J.C."/>
            <person name="Davis R.W."/>
        </authorList>
    </citation>
    <scope>NUCLEOTIDE SEQUENCE [LARGE SCALE GENOMIC DNA]</scope>
    <source>
        <strain>cv. Columbia</strain>
    </source>
</reference>
<reference key="2">
    <citation type="journal article" date="2017" name="Plant J.">
        <title>Araport11: a complete reannotation of the Arabidopsis thaliana reference genome.</title>
        <authorList>
            <person name="Cheng C.Y."/>
            <person name="Krishnakumar V."/>
            <person name="Chan A.P."/>
            <person name="Thibaud-Nissen F."/>
            <person name="Schobel S."/>
            <person name="Town C.D."/>
        </authorList>
    </citation>
    <scope>GENOME REANNOTATION</scope>
    <source>
        <strain>cv. Columbia</strain>
    </source>
</reference>
<reference key="3">
    <citation type="journal article" date="2003" name="Science">
        <title>Empirical analysis of transcriptional activity in the Arabidopsis genome.</title>
        <authorList>
            <person name="Yamada K."/>
            <person name="Lim J."/>
            <person name="Dale J.M."/>
            <person name="Chen H."/>
            <person name="Shinn P."/>
            <person name="Palm C.J."/>
            <person name="Southwick A.M."/>
            <person name="Wu H.C."/>
            <person name="Kim C.J."/>
            <person name="Nguyen M."/>
            <person name="Pham P.K."/>
            <person name="Cheuk R.F."/>
            <person name="Karlin-Newmann G."/>
            <person name="Liu S.X."/>
            <person name="Lam B."/>
            <person name="Sakano H."/>
            <person name="Wu T."/>
            <person name="Yu G."/>
            <person name="Miranda M."/>
            <person name="Quach H.L."/>
            <person name="Tripp M."/>
            <person name="Chang C.H."/>
            <person name="Lee J.M."/>
            <person name="Toriumi M.J."/>
            <person name="Chan M.M."/>
            <person name="Tang C.C."/>
            <person name="Onodera C.S."/>
            <person name="Deng J.M."/>
            <person name="Akiyama K."/>
            <person name="Ansari Y."/>
            <person name="Arakawa T."/>
            <person name="Banh J."/>
            <person name="Banno F."/>
            <person name="Bowser L."/>
            <person name="Brooks S.Y."/>
            <person name="Carninci P."/>
            <person name="Chao Q."/>
            <person name="Choy N."/>
            <person name="Enju A."/>
            <person name="Goldsmith A.D."/>
            <person name="Gurjal M."/>
            <person name="Hansen N.F."/>
            <person name="Hayashizaki Y."/>
            <person name="Johnson-Hopson C."/>
            <person name="Hsuan V.W."/>
            <person name="Iida K."/>
            <person name="Karnes M."/>
            <person name="Khan S."/>
            <person name="Koesema E."/>
            <person name="Ishida J."/>
            <person name="Jiang P.X."/>
            <person name="Jones T."/>
            <person name="Kawai J."/>
            <person name="Kamiya A."/>
            <person name="Meyers C."/>
            <person name="Nakajima M."/>
            <person name="Narusaka M."/>
            <person name="Seki M."/>
            <person name="Sakurai T."/>
            <person name="Satou M."/>
            <person name="Tamse R."/>
            <person name="Vaysberg M."/>
            <person name="Wallender E.K."/>
            <person name="Wong C."/>
            <person name="Yamamura Y."/>
            <person name="Yuan S."/>
            <person name="Shinozaki K."/>
            <person name="Davis R.W."/>
            <person name="Theologis A."/>
            <person name="Ecker J.R."/>
        </authorList>
    </citation>
    <scope>NUCLEOTIDE SEQUENCE [LARGE SCALE MRNA] (ISOFORM 2)</scope>
    <source>
        <strain>cv. Columbia</strain>
    </source>
</reference>
<reference key="4">
    <citation type="journal article" date="2004" name="Genome Res.">
        <title>Whole genome sequence comparisons and 'full-length' cDNA sequences: a combined approach to evaluate and improve Arabidopsis genome annotation.</title>
        <authorList>
            <person name="Castelli V."/>
            <person name="Aury J.-M."/>
            <person name="Jaillon O."/>
            <person name="Wincker P."/>
            <person name="Clepet C."/>
            <person name="Menard M."/>
            <person name="Cruaud C."/>
            <person name="Quetier F."/>
            <person name="Scarpelli C."/>
            <person name="Schaechter V."/>
            <person name="Temple G."/>
            <person name="Caboche M."/>
            <person name="Weissenbach J."/>
            <person name="Salanoubat M."/>
        </authorList>
    </citation>
    <scope>NUCLEOTIDE SEQUENCE [LARGE SCALE MRNA] (ISOFORM 1)</scope>
    <source>
        <strain>cv. Columbia</strain>
    </source>
</reference>
<reference key="5">
    <citation type="submission" date="2002-03" db="EMBL/GenBank/DDBJ databases">
        <title>Full-length cDNA from Arabidopsis thaliana.</title>
        <authorList>
            <person name="Brover V.V."/>
            <person name="Troukhan M.E."/>
            <person name="Alexandrov N.A."/>
            <person name="Lu Y.-P."/>
            <person name="Flavell R.B."/>
            <person name="Feldmann K.A."/>
        </authorList>
    </citation>
    <scope>NUCLEOTIDE SEQUENCE [LARGE SCALE MRNA] (ISOFORM 2)</scope>
</reference>
<reference key="6">
    <citation type="journal article" date="2004" name="Biochim. Biophys. Acta">
        <title>Plant protein inhibitors of invertases.</title>
        <authorList>
            <person name="Rausch T."/>
            <person name="Greiner S."/>
        </authorList>
    </citation>
    <scope>FUNCTION</scope>
</reference>
<reference key="7">
    <citation type="journal article" date="2004" name="FEBS Lett.">
        <title>In Arabidopsis thaliana, the invertase inhibitors AtC/VIF1 and 2 exhibit distinct target enzyme specificities and expression profiles.</title>
        <authorList>
            <person name="Link M."/>
            <person name="Rausch T."/>
            <person name="Greiner S."/>
        </authorList>
    </citation>
    <scope>FUNCTION</scope>
    <scope>DISRUPTION PHENOTYPE</scope>
    <scope>TISSUE SPECIFICITY</scope>
    <scope>DISULFIDE BOND</scope>
    <scope>GENE FAMILY</scope>
    <scope>NOMENCLATURE</scope>
    <source>
        <strain>cv. Wassilewskija</strain>
    </source>
</reference>
<protein>
    <recommendedName>
        <fullName>Cell wall / vacuolar inhibitor of fructosidase 1</fullName>
        <shortName>AtC/VIF1</shortName>
    </recommendedName>
</protein>
<dbReference type="EMBL" id="AC051631">
    <property type="protein sequence ID" value="AAG51534.1"/>
    <property type="molecule type" value="Genomic_DNA"/>
</dbReference>
<dbReference type="EMBL" id="CP002684">
    <property type="protein sequence ID" value="AEE32232.1"/>
    <property type="molecule type" value="Genomic_DNA"/>
</dbReference>
<dbReference type="EMBL" id="CP002684">
    <property type="protein sequence ID" value="ANM58162.1"/>
    <property type="molecule type" value="Genomic_DNA"/>
</dbReference>
<dbReference type="EMBL" id="AF412119">
    <property type="protein sequence ID" value="AAL06571.1"/>
    <property type="molecule type" value="mRNA"/>
</dbReference>
<dbReference type="EMBL" id="AY056119">
    <property type="protein sequence ID" value="AAL07005.1"/>
    <property type="molecule type" value="mRNA"/>
</dbReference>
<dbReference type="EMBL" id="AY090265">
    <property type="protein sequence ID" value="AAL90926.1"/>
    <property type="molecule type" value="mRNA"/>
</dbReference>
<dbReference type="EMBL" id="BX816333">
    <property type="status" value="NOT_ANNOTATED_CDS"/>
    <property type="molecule type" value="mRNA"/>
</dbReference>
<dbReference type="EMBL" id="AY084290">
    <property type="protein sequence ID" value="AAM60881.1"/>
    <property type="molecule type" value="mRNA"/>
</dbReference>
<dbReference type="PIR" id="H96519">
    <property type="entry name" value="H96519"/>
</dbReference>
<dbReference type="RefSeq" id="NP_001320618.1">
    <molecule id="F4HWQ8-2"/>
    <property type="nucleotide sequence ID" value="NM_001333288.1"/>
</dbReference>
<dbReference type="RefSeq" id="NP_564516.2">
    <molecule id="F4HWQ8-1"/>
    <property type="nucleotide sequence ID" value="NM_103692.3"/>
</dbReference>
<dbReference type="SMR" id="F4HWQ8"/>
<dbReference type="FunCoup" id="F4HWQ8">
    <property type="interactions" value="35"/>
</dbReference>
<dbReference type="STRING" id="3702.F4HWQ8"/>
<dbReference type="GlyCosmos" id="F4HWQ8">
    <property type="glycosylation" value="2 sites, No reported glycans"/>
</dbReference>
<dbReference type="GlyGen" id="F4HWQ8">
    <property type="glycosylation" value="2 sites"/>
</dbReference>
<dbReference type="PaxDb" id="3702-AT1G47960.1"/>
<dbReference type="ProteomicsDB" id="220323">
    <molecule id="F4HWQ8-1"/>
</dbReference>
<dbReference type="EnsemblPlants" id="AT1G47960.1">
    <molecule id="F4HWQ8-1"/>
    <property type="protein sequence ID" value="AT1G47960.1"/>
    <property type="gene ID" value="AT1G47960"/>
</dbReference>
<dbReference type="EnsemblPlants" id="AT1G47960.2">
    <molecule id="F4HWQ8-2"/>
    <property type="protein sequence ID" value="AT1G47960.2"/>
    <property type="gene ID" value="AT1G47960"/>
</dbReference>
<dbReference type="GeneID" id="841214"/>
<dbReference type="Gramene" id="AT1G47960.1">
    <molecule id="F4HWQ8-1"/>
    <property type="protein sequence ID" value="AT1G47960.1"/>
    <property type="gene ID" value="AT1G47960"/>
</dbReference>
<dbReference type="Gramene" id="AT1G47960.2">
    <molecule id="F4HWQ8-2"/>
    <property type="protein sequence ID" value="AT1G47960.2"/>
    <property type="gene ID" value="AT1G47960"/>
</dbReference>
<dbReference type="KEGG" id="ath:AT1G47960"/>
<dbReference type="Araport" id="AT1G47960"/>
<dbReference type="TAIR" id="AT1G47960">
    <property type="gene designation" value="C/VIF1"/>
</dbReference>
<dbReference type="eggNOG" id="ENOG502S67R">
    <property type="taxonomic scope" value="Eukaryota"/>
</dbReference>
<dbReference type="HOGENOM" id="CLU_033761_5_0_1"/>
<dbReference type="InParanoid" id="F4HWQ8"/>
<dbReference type="OMA" id="WIHPLKE"/>
<dbReference type="PRO" id="PR:F4HWQ8"/>
<dbReference type="Proteomes" id="UP000006548">
    <property type="component" value="Chromosome 1"/>
</dbReference>
<dbReference type="ExpressionAtlas" id="F4HWQ8">
    <property type="expression patterns" value="baseline and differential"/>
</dbReference>
<dbReference type="GO" id="GO:0005773">
    <property type="term" value="C:vacuole"/>
    <property type="evidence" value="ECO:0007669"/>
    <property type="project" value="UniProtKB-SubCell"/>
</dbReference>
<dbReference type="GO" id="GO:0004857">
    <property type="term" value="F:enzyme inhibitor activity"/>
    <property type="evidence" value="ECO:0000314"/>
    <property type="project" value="UniProtKB"/>
</dbReference>
<dbReference type="GO" id="GO:0043086">
    <property type="term" value="P:negative regulation of catalytic activity"/>
    <property type="evidence" value="ECO:0000314"/>
    <property type="project" value="UniProtKB"/>
</dbReference>
<dbReference type="CDD" id="cd15796">
    <property type="entry name" value="CIF_like"/>
    <property type="match status" value="1"/>
</dbReference>
<dbReference type="FunFam" id="1.20.140.40:FF:000009">
    <property type="entry name" value="Invertase/pectin methylesterase inhibitor family protein"/>
    <property type="match status" value="1"/>
</dbReference>
<dbReference type="Gene3D" id="1.20.140.40">
    <property type="entry name" value="Invertase/pectin methylesterase inhibitor family protein"/>
    <property type="match status" value="1"/>
</dbReference>
<dbReference type="InterPro" id="IPR034087">
    <property type="entry name" value="C/VIF1"/>
</dbReference>
<dbReference type="InterPro" id="IPR035513">
    <property type="entry name" value="Invertase/methylesterase_inhib"/>
</dbReference>
<dbReference type="InterPro" id="IPR052421">
    <property type="entry name" value="PCW_Enzyme_Inhibitor"/>
</dbReference>
<dbReference type="InterPro" id="IPR006501">
    <property type="entry name" value="Pectinesterase_inhib_dom"/>
</dbReference>
<dbReference type="NCBIfam" id="TIGR01614">
    <property type="entry name" value="PME_inhib"/>
    <property type="match status" value="1"/>
</dbReference>
<dbReference type="PANTHER" id="PTHR36710">
    <property type="entry name" value="PECTINESTERASE INHIBITOR-LIKE"/>
    <property type="match status" value="1"/>
</dbReference>
<dbReference type="PANTHER" id="PTHR36710:SF13">
    <property type="entry name" value="PUTATIVE-RELATED"/>
    <property type="match status" value="1"/>
</dbReference>
<dbReference type="Pfam" id="PF04043">
    <property type="entry name" value="PMEI"/>
    <property type="match status" value="1"/>
</dbReference>
<dbReference type="SMART" id="SM00856">
    <property type="entry name" value="PMEI"/>
    <property type="match status" value="1"/>
</dbReference>
<dbReference type="SUPFAM" id="SSF101148">
    <property type="entry name" value="Plant invertase/pectin methylesterase inhibitor"/>
    <property type="match status" value="1"/>
</dbReference>
<name>CVIF1_ARATH</name>
<accession>F4HWQ8</accession>
<accession>Q9C7Y8</accession>
<evidence type="ECO:0000250" key="1"/>
<evidence type="ECO:0000255" key="2"/>
<evidence type="ECO:0000269" key="3">
    <source>
    </source>
</evidence>
<evidence type="ECO:0000269" key="4">
    <source>
    </source>
</evidence>
<evidence type="ECO:0000303" key="5">
    <source>
    </source>
</evidence>
<evidence type="ECO:0000303" key="6">
    <source ref="5"/>
</evidence>
<evidence type="ECO:0000305" key="7"/>
<proteinExistence type="evidence at protein level"/>
<organism>
    <name type="scientific">Arabidopsis thaliana</name>
    <name type="common">Mouse-ear cress</name>
    <dbReference type="NCBI Taxonomy" id="3702"/>
    <lineage>
        <taxon>Eukaryota</taxon>
        <taxon>Viridiplantae</taxon>
        <taxon>Streptophyta</taxon>
        <taxon>Embryophyta</taxon>
        <taxon>Tracheophyta</taxon>
        <taxon>Spermatophyta</taxon>
        <taxon>Magnoliopsida</taxon>
        <taxon>eudicotyledons</taxon>
        <taxon>Gunneridae</taxon>
        <taxon>Pentapetalae</taxon>
        <taxon>rosids</taxon>
        <taxon>malvids</taxon>
        <taxon>Brassicales</taxon>
        <taxon>Brassicaceae</taxon>
        <taxon>Camelineae</taxon>
        <taxon>Arabidopsis</taxon>
    </lineage>
</organism>
<gene>
    <name type="primary">C/VIF1</name>
    <name type="synonym">CIF1</name>
    <name type="synonym">VIF1</name>
    <name type="ordered locus">At1g47960</name>
    <name type="ORF">T2J15.13</name>
</gene>
<keyword id="KW-0025">Alternative splicing</keyword>
<keyword id="KW-1015">Disulfide bond</keyword>
<keyword id="KW-0325">Glycoprotein</keyword>
<keyword id="KW-1185">Reference proteome</keyword>
<keyword id="KW-0732">Signal</keyword>
<keyword id="KW-0926">Vacuole</keyword>
<sequence length="205" mass="22326">MKMMKVMMLIVMMMMVMVMVSEGSIIEPTCKETPDFNLCVSLLNSDPRGSSADTSGLALILIDKIKGLATKTLNEINGLYKKRPELKRALDECSRRYKTILNADVPEAIEAISKGVPKFGEDGVIDAGVEASVCQGGFNGSSPLTSLTKSMQKISNVTRAIFYSNSIVKEEACGSSWPSLALNIDSKACVVSLQNIQFNRGRTCW</sequence>
<feature type="signal peptide" evidence="2">
    <location>
        <begin position="1"/>
        <end position="23"/>
    </location>
</feature>
<feature type="chain" id="PRO_0000417021" description="Cell wall / vacuolar inhibitor of fructosidase 1">
    <location>
        <begin position="24"/>
        <end position="205"/>
    </location>
</feature>
<feature type="glycosylation site" description="N-linked (GlcNAc...) asparagine" evidence="2">
    <location>
        <position position="139"/>
    </location>
</feature>
<feature type="glycosylation site" description="N-linked (GlcNAc...) asparagine" evidence="2">
    <location>
        <position position="156"/>
    </location>
</feature>
<feature type="disulfide bond" evidence="1">
    <location>
        <begin position="30"/>
        <end position="39"/>
    </location>
</feature>
<feature type="disulfide bond" evidence="1">
    <location>
        <begin position="93"/>
        <end position="134"/>
    </location>
</feature>
<feature type="splice variant" id="VSP_043174" description="In isoform 2." evidence="5 6">
    <original>FYSNSIVKEEACGSSWPSLALNIDSKACVVSLQNIQFNRGRTCW</original>
    <variation>VRMLL</variation>
    <location>
        <begin position="162"/>
        <end position="205"/>
    </location>
</feature>